<reference key="1">
    <citation type="journal article" date="2002" name="Proc. Natl. Acad. Sci. U.S.A.">
        <title>Genome sequence of a serotype M3 strain of group A Streptococcus: phage-encoded toxins, the high-virulence phenotype, and clone emergence.</title>
        <authorList>
            <person name="Beres S.B."/>
            <person name="Sylva G.L."/>
            <person name="Barbian K.D."/>
            <person name="Lei B."/>
            <person name="Hoff J.S."/>
            <person name="Mammarella N.D."/>
            <person name="Liu M.-Y."/>
            <person name="Smoot J.C."/>
            <person name="Porcella S.F."/>
            <person name="Parkins L.D."/>
            <person name="Campbell D.S."/>
            <person name="Smith T.M."/>
            <person name="McCormick J.K."/>
            <person name="Leung D.Y.M."/>
            <person name="Schlievert P.M."/>
            <person name="Musser J.M."/>
        </authorList>
    </citation>
    <scope>NUCLEOTIDE SEQUENCE [LARGE SCALE GENOMIC DNA]</scope>
    <source>
        <strain>ATCC BAA-595 / MGAS315</strain>
    </source>
</reference>
<comment type="function">
    <text evidence="1">Forms part of the ribosomal stalk which helps the ribosome interact with GTP-bound translation factors.</text>
</comment>
<comment type="subunit">
    <text evidence="1">Part of the ribosomal stalk of the 50S ribosomal subunit. Interacts with L10 and the large rRNA to form the base of the stalk. L10 forms an elongated spine to which L12 dimers bind in a sequential fashion forming a multimeric L10(L12)X complex.</text>
</comment>
<comment type="PTM">
    <text evidence="1">One or more lysine residues are methylated.</text>
</comment>
<comment type="similarity">
    <text evidence="1">Belongs to the universal ribosomal protein uL11 family.</text>
</comment>
<protein>
    <recommendedName>
        <fullName evidence="1">Large ribosomal subunit protein uL11</fullName>
    </recommendedName>
    <alternativeName>
        <fullName evidence="2">50S ribosomal protein L11</fullName>
    </alternativeName>
</protein>
<feature type="chain" id="PRO_0000104386" description="Large ribosomal subunit protein uL11">
    <location>
        <begin position="1"/>
        <end position="141"/>
    </location>
</feature>
<gene>
    <name evidence="1" type="primary">rplK</name>
    <name type="synonym">rl11</name>
    <name type="ordered locus">SpyM3_0324</name>
</gene>
<evidence type="ECO:0000255" key="1">
    <source>
        <dbReference type="HAMAP-Rule" id="MF_00736"/>
    </source>
</evidence>
<evidence type="ECO:0000305" key="2"/>
<proteinExistence type="inferred from homology"/>
<sequence>MAKKVEKLVKLQIPAGKATPAPPVGPALGQAGINIMGFTKEFNARTADQAGMIIPVVISVYEDKSFDFITKTPPAAVLLKKAAGVEKGSGTPNTTKVATVTRAQVQEIAETKMPDLNAANIEAAMRMIEGTARSMGFTVTD</sequence>
<name>RL11_STRP3</name>
<dbReference type="EMBL" id="AE014074">
    <property type="protein sequence ID" value="AAM78931.1"/>
    <property type="molecule type" value="Genomic_DNA"/>
</dbReference>
<dbReference type="RefSeq" id="WP_002990800.1">
    <property type="nucleotide sequence ID" value="NC_004070.1"/>
</dbReference>
<dbReference type="SMR" id="P0DE00"/>
<dbReference type="GeneID" id="69901302"/>
<dbReference type="KEGG" id="spg:SpyM3_0324"/>
<dbReference type="HOGENOM" id="CLU_074237_2_1_9"/>
<dbReference type="Proteomes" id="UP000000564">
    <property type="component" value="Chromosome"/>
</dbReference>
<dbReference type="GO" id="GO:0022625">
    <property type="term" value="C:cytosolic large ribosomal subunit"/>
    <property type="evidence" value="ECO:0007669"/>
    <property type="project" value="TreeGrafter"/>
</dbReference>
<dbReference type="GO" id="GO:0070180">
    <property type="term" value="F:large ribosomal subunit rRNA binding"/>
    <property type="evidence" value="ECO:0007669"/>
    <property type="project" value="UniProtKB-UniRule"/>
</dbReference>
<dbReference type="GO" id="GO:0003735">
    <property type="term" value="F:structural constituent of ribosome"/>
    <property type="evidence" value="ECO:0007669"/>
    <property type="project" value="InterPro"/>
</dbReference>
<dbReference type="GO" id="GO:0006412">
    <property type="term" value="P:translation"/>
    <property type="evidence" value="ECO:0007669"/>
    <property type="project" value="UniProtKB-UniRule"/>
</dbReference>
<dbReference type="CDD" id="cd00349">
    <property type="entry name" value="Ribosomal_L11"/>
    <property type="match status" value="1"/>
</dbReference>
<dbReference type="FunFam" id="1.10.10.250:FF:000001">
    <property type="entry name" value="50S ribosomal protein L11"/>
    <property type="match status" value="1"/>
</dbReference>
<dbReference type="FunFam" id="3.30.1550.10:FF:000001">
    <property type="entry name" value="50S ribosomal protein L11"/>
    <property type="match status" value="1"/>
</dbReference>
<dbReference type="Gene3D" id="1.10.10.250">
    <property type="entry name" value="Ribosomal protein L11, C-terminal domain"/>
    <property type="match status" value="1"/>
</dbReference>
<dbReference type="Gene3D" id="3.30.1550.10">
    <property type="entry name" value="Ribosomal protein L11/L12, N-terminal domain"/>
    <property type="match status" value="1"/>
</dbReference>
<dbReference type="HAMAP" id="MF_00736">
    <property type="entry name" value="Ribosomal_uL11"/>
    <property type="match status" value="1"/>
</dbReference>
<dbReference type="InterPro" id="IPR000911">
    <property type="entry name" value="Ribosomal_uL11"/>
</dbReference>
<dbReference type="InterPro" id="IPR006519">
    <property type="entry name" value="Ribosomal_uL11_bac-typ"/>
</dbReference>
<dbReference type="InterPro" id="IPR020783">
    <property type="entry name" value="Ribosomal_uL11_C"/>
</dbReference>
<dbReference type="InterPro" id="IPR036769">
    <property type="entry name" value="Ribosomal_uL11_C_sf"/>
</dbReference>
<dbReference type="InterPro" id="IPR020785">
    <property type="entry name" value="Ribosomal_uL11_CS"/>
</dbReference>
<dbReference type="InterPro" id="IPR020784">
    <property type="entry name" value="Ribosomal_uL11_N"/>
</dbReference>
<dbReference type="InterPro" id="IPR036796">
    <property type="entry name" value="Ribosomal_uL11_N_sf"/>
</dbReference>
<dbReference type="NCBIfam" id="TIGR01632">
    <property type="entry name" value="L11_bact"/>
    <property type="match status" value="1"/>
</dbReference>
<dbReference type="PANTHER" id="PTHR11661">
    <property type="entry name" value="60S RIBOSOMAL PROTEIN L12"/>
    <property type="match status" value="1"/>
</dbReference>
<dbReference type="PANTHER" id="PTHR11661:SF1">
    <property type="entry name" value="LARGE RIBOSOMAL SUBUNIT PROTEIN UL11M"/>
    <property type="match status" value="1"/>
</dbReference>
<dbReference type="Pfam" id="PF00298">
    <property type="entry name" value="Ribosomal_L11"/>
    <property type="match status" value="1"/>
</dbReference>
<dbReference type="Pfam" id="PF03946">
    <property type="entry name" value="Ribosomal_L11_N"/>
    <property type="match status" value="1"/>
</dbReference>
<dbReference type="SMART" id="SM00649">
    <property type="entry name" value="RL11"/>
    <property type="match status" value="1"/>
</dbReference>
<dbReference type="SUPFAM" id="SSF54747">
    <property type="entry name" value="Ribosomal L11/L12e N-terminal domain"/>
    <property type="match status" value="1"/>
</dbReference>
<dbReference type="SUPFAM" id="SSF46906">
    <property type="entry name" value="Ribosomal protein L11, C-terminal domain"/>
    <property type="match status" value="1"/>
</dbReference>
<dbReference type="PROSITE" id="PS00359">
    <property type="entry name" value="RIBOSOMAL_L11"/>
    <property type="match status" value="1"/>
</dbReference>
<keyword id="KW-0488">Methylation</keyword>
<keyword id="KW-0687">Ribonucleoprotein</keyword>
<keyword id="KW-0689">Ribosomal protein</keyword>
<keyword id="KW-0694">RNA-binding</keyword>
<keyword id="KW-0699">rRNA-binding</keyword>
<organism>
    <name type="scientific">Streptococcus pyogenes serotype M3 (strain ATCC BAA-595 / MGAS315)</name>
    <dbReference type="NCBI Taxonomy" id="198466"/>
    <lineage>
        <taxon>Bacteria</taxon>
        <taxon>Bacillati</taxon>
        <taxon>Bacillota</taxon>
        <taxon>Bacilli</taxon>
        <taxon>Lactobacillales</taxon>
        <taxon>Streptococcaceae</taxon>
        <taxon>Streptococcus</taxon>
    </lineage>
</organism>
<accession>P0DE00</accession>
<accession>P66060</accession>
<accession>Q9A153</accession>